<protein>
    <recommendedName>
        <fullName evidence="1">UPF0391 membrane protein YtjA</fullName>
    </recommendedName>
</protein>
<dbReference type="EMBL" id="CP000243">
    <property type="protein sequence ID" value="ABE10546.1"/>
    <property type="status" value="ALT_INIT"/>
    <property type="molecule type" value="Genomic_DNA"/>
</dbReference>
<dbReference type="RefSeq" id="WP_000490275.1">
    <property type="nucleotide sequence ID" value="NZ_CP064825.1"/>
</dbReference>
<dbReference type="KEGG" id="eci:UTI89_C5146"/>
<dbReference type="HOGENOM" id="CLU_187346_2_0_6"/>
<dbReference type="Proteomes" id="UP000001952">
    <property type="component" value="Chromosome"/>
</dbReference>
<dbReference type="GO" id="GO:0005886">
    <property type="term" value="C:plasma membrane"/>
    <property type="evidence" value="ECO:0007669"/>
    <property type="project" value="UniProtKB-SubCell"/>
</dbReference>
<dbReference type="HAMAP" id="MF_01361">
    <property type="entry name" value="UPF0391"/>
    <property type="match status" value="1"/>
</dbReference>
<dbReference type="InterPro" id="IPR009760">
    <property type="entry name" value="DUF1328"/>
</dbReference>
<dbReference type="NCBIfam" id="NF010229">
    <property type="entry name" value="PRK13682.1-4"/>
    <property type="match status" value="1"/>
</dbReference>
<dbReference type="NCBIfam" id="NF010230">
    <property type="entry name" value="PRK13682.1-5"/>
    <property type="match status" value="1"/>
</dbReference>
<dbReference type="Pfam" id="PF07043">
    <property type="entry name" value="DUF1328"/>
    <property type="match status" value="1"/>
</dbReference>
<dbReference type="PIRSF" id="PIRSF036466">
    <property type="entry name" value="UCP036466"/>
    <property type="match status" value="1"/>
</dbReference>
<accession>Q1R268</accession>
<feature type="chain" id="PRO_0000256734" description="UPF0391 membrane protein YtjA">
    <location>
        <begin position="1"/>
        <end position="53"/>
    </location>
</feature>
<feature type="transmembrane region" description="Helical" evidence="1">
    <location>
        <begin position="4"/>
        <end position="24"/>
    </location>
</feature>
<feature type="transmembrane region" description="Helical" evidence="1">
    <location>
        <begin position="30"/>
        <end position="48"/>
    </location>
</feature>
<proteinExistence type="inferred from homology"/>
<keyword id="KW-1003">Cell membrane</keyword>
<keyword id="KW-0472">Membrane</keyword>
<keyword id="KW-0812">Transmembrane</keyword>
<keyword id="KW-1133">Transmembrane helix</keyword>
<reference key="1">
    <citation type="journal article" date="2006" name="Proc. Natl. Acad. Sci. U.S.A.">
        <title>Identification of genes subject to positive selection in uropathogenic strains of Escherichia coli: a comparative genomics approach.</title>
        <authorList>
            <person name="Chen S.L."/>
            <person name="Hung C.-S."/>
            <person name="Xu J."/>
            <person name="Reigstad C.S."/>
            <person name="Magrini V."/>
            <person name="Sabo A."/>
            <person name="Blasiar D."/>
            <person name="Bieri T."/>
            <person name="Meyer R.R."/>
            <person name="Ozersky P."/>
            <person name="Armstrong J.R."/>
            <person name="Fulton R.S."/>
            <person name="Latreille J.P."/>
            <person name="Spieth J."/>
            <person name="Hooton T.M."/>
            <person name="Mardis E.R."/>
            <person name="Hultgren S.J."/>
            <person name="Gordon J.I."/>
        </authorList>
    </citation>
    <scope>NUCLEOTIDE SEQUENCE [LARGE SCALE GENOMIC DNA]</scope>
    <source>
        <strain>UTI89 / UPEC</strain>
    </source>
</reference>
<comment type="subcellular location">
    <subcellularLocation>
        <location evidence="1">Cell membrane</location>
        <topology evidence="1">Multi-pass membrane protein</topology>
    </subcellularLocation>
</comment>
<comment type="similarity">
    <text evidence="1">Belongs to the UPF0391 family.</text>
</comment>
<comment type="sequence caution" evidence="2">
    <conflict type="erroneous initiation">
        <sequence resource="EMBL-CDS" id="ABE10546"/>
    </conflict>
</comment>
<organism>
    <name type="scientific">Escherichia coli (strain UTI89 / UPEC)</name>
    <dbReference type="NCBI Taxonomy" id="364106"/>
    <lineage>
        <taxon>Bacteria</taxon>
        <taxon>Pseudomonadati</taxon>
        <taxon>Pseudomonadota</taxon>
        <taxon>Gammaproteobacteria</taxon>
        <taxon>Enterobacterales</taxon>
        <taxon>Enterobacteriaceae</taxon>
        <taxon>Escherichia</taxon>
    </lineage>
</organism>
<name>YTJA_ECOUT</name>
<evidence type="ECO:0000255" key="1">
    <source>
        <dbReference type="HAMAP-Rule" id="MF_01361"/>
    </source>
</evidence>
<evidence type="ECO:0000305" key="2"/>
<sequence>MFRWGIIFLVIALIAAALGFGGLAGTAAGAAKIVFVVGIILFLVSLFMGRKRP</sequence>
<gene>
    <name evidence="1" type="primary">ytjA</name>
    <name type="ordered locus">UTI89_C5146</name>
</gene>